<dbReference type="EC" id="7.2.2.-"/>
<dbReference type="EMBL" id="AL123456">
    <property type="protein sequence ID" value="CCP44106.1"/>
    <property type="molecule type" value="Genomic_DNA"/>
</dbReference>
<dbReference type="PIR" id="C70740">
    <property type="entry name" value="C70740"/>
</dbReference>
<dbReference type="RefSeq" id="NP_215864.1">
    <property type="nucleotide sequence ID" value="NC_000962.3"/>
</dbReference>
<dbReference type="RefSeq" id="WP_003406958.1">
    <property type="nucleotide sequence ID" value="NZ_NVQJ01000031.1"/>
</dbReference>
<dbReference type="PDB" id="7WIU">
    <property type="method" value="EM"/>
    <property type="resolution" value="3.48 A"/>
    <property type="chains" value="A=1-859"/>
</dbReference>
<dbReference type="PDB" id="7WIV">
    <property type="method" value="EM"/>
    <property type="resolution" value="2.88 A"/>
    <property type="chains" value="A=1-859"/>
</dbReference>
<dbReference type="PDB" id="7WIW">
    <property type="method" value="EM"/>
    <property type="resolution" value="3.12 A"/>
    <property type="chains" value="A=1-859"/>
</dbReference>
<dbReference type="PDB" id="7WIX">
    <property type="method" value="EM"/>
    <property type="resolution" value="3.53 A"/>
    <property type="chains" value="A=1-859"/>
</dbReference>
<dbReference type="PDBsum" id="7WIU"/>
<dbReference type="PDBsum" id="7WIV"/>
<dbReference type="PDBsum" id="7WIW"/>
<dbReference type="PDBsum" id="7WIX"/>
<dbReference type="EMDB" id="EMD-32536"/>
<dbReference type="EMDB" id="EMD-32537"/>
<dbReference type="EMDB" id="EMD-32538"/>
<dbReference type="EMDB" id="EMD-32539"/>
<dbReference type="SMR" id="P9WQJ9"/>
<dbReference type="FunCoup" id="P9WQJ9">
    <property type="interactions" value="83"/>
</dbReference>
<dbReference type="STRING" id="83332.Rv1348"/>
<dbReference type="PaxDb" id="83332-Rv1348"/>
<dbReference type="GeneID" id="886853"/>
<dbReference type="KEGG" id="mtu:Rv1348"/>
<dbReference type="KEGG" id="mtv:RVBD_1348"/>
<dbReference type="TubercuList" id="Rv1348"/>
<dbReference type="eggNOG" id="COG1132">
    <property type="taxonomic scope" value="Bacteria"/>
</dbReference>
<dbReference type="eggNOG" id="COG2375">
    <property type="taxonomic scope" value="Bacteria"/>
</dbReference>
<dbReference type="InParanoid" id="P9WQJ9"/>
<dbReference type="OrthoDB" id="9806127at2"/>
<dbReference type="PhylomeDB" id="P9WQJ9"/>
<dbReference type="Reactome" id="R-HSA-1222449">
    <property type="pathway name" value="Mtb iron assimilation by chelation"/>
</dbReference>
<dbReference type="Proteomes" id="UP000001584">
    <property type="component" value="Chromosome"/>
</dbReference>
<dbReference type="GO" id="GO:0005886">
    <property type="term" value="C:plasma membrane"/>
    <property type="evidence" value="ECO:0000314"/>
    <property type="project" value="MTBBASE"/>
</dbReference>
<dbReference type="GO" id="GO:0140359">
    <property type="term" value="F:ABC-type transporter activity"/>
    <property type="evidence" value="ECO:0007669"/>
    <property type="project" value="InterPro"/>
</dbReference>
<dbReference type="GO" id="GO:0005524">
    <property type="term" value="F:ATP binding"/>
    <property type="evidence" value="ECO:0007669"/>
    <property type="project" value="UniProtKB-KW"/>
</dbReference>
<dbReference type="GO" id="GO:0016887">
    <property type="term" value="F:ATP hydrolysis activity"/>
    <property type="evidence" value="ECO:0007669"/>
    <property type="project" value="InterPro"/>
</dbReference>
<dbReference type="GO" id="GO:0042626">
    <property type="term" value="F:ATPase-coupled transmembrane transporter activity"/>
    <property type="evidence" value="ECO:0000318"/>
    <property type="project" value="GO_Central"/>
</dbReference>
<dbReference type="GO" id="GO:0071949">
    <property type="term" value="F:FAD binding"/>
    <property type="evidence" value="ECO:0000314"/>
    <property type="project" value="MTBBASE"/>
</dbReference>
<dbReference type="GO" id="GO:0016491">
    <property type="term" value="F:oxidoreductase activity"/>
    <property type="evidence" value="ECO:0007669"/>
    <property type="project" value="InterPro"/>
</dbReference>
<dbReference type="GO" id="GO:0015343">
    <property type="term" value="F:siderophore-iron transmembrane transporter activity"/>
    <property type="evidence" value="ECO:0000314"/>
    <property type="project" value="MTBBASE"/>
</dbReference>
<dbReference type="GO" id="GO:0010106">
    <property type="term" value="P:cellular response to iron ion starvation"/>
    <property type="evidence" value="ECO:0000270"/>
    <property type="project" value="MTBBASE"/>
</dbReference>
<dbReference type="GO" id="GO:0006879">
    <property type="term" value="P:intracellular iron ion homeostasis"/>
    <property type="evidence" value="ECO:0000315"/>
    <property type="project" value="GO_Central"/>
</dbReference>
<dbReference type="GO" id="GO:0044847">
    <property type="term" value="P:iron acquisition from host"/>
    <property type="evidence" value="ECO:0000315"/>
    <property type="project" value="GO_Central"/>
</dbReference>
<dbReference type="GO" id="GO:0033214">
    <property type="term" value="P:siderophore-dependent iron import into cell"/>
    <property type="evidence" value="ECO:0000314"/>
    <property type="project" value="GO_Central"/>
</dbReference>
<dbReference type="CDD" id="cd06193">
    <property type="entry name" value="siderophore_interacting"/>
    <property type="match status" value="1"/>
</dbReference>
<dbReference type="FunFam" id="3.40.50.300:FF:002355">
    <property type="entry name" value="Drugs ABC transporter ATP-binding protein"/>
    <property type="match status" value="1"/>
</dbReference>
<dbReference type="FunFam" id="1.20.1560.10:FF:000177">
    <property type="entry name" value="Iron ABC transporter ATP-binding protein/permease IrtA"/>
    <property type="match status" value="1"/>
</dbReference>
<dbReference type="FunFam" id="2.40.30.10:FF:000162">
    <property type="entry name" value="Iron ABC transporter ATP-binding protein/permease IrtA"/>
    <property type="match status" value="1"/>
</dbReference>
<dbReference type="FunFam" id="3.40.50.80:FF:000068">
    <property type="entry name" value="Iron ABC transporter ATP-binding protein/permease IrtA"/>
    <property type="match status" value="1"/>
</dbReference>
<dbReference type="Gene3D" id="1.20.1560.10">
    <property type="entry name" value="ABC transporter type 1, transmembrane domain"/>
    <property type="match status" value="1"/>
</dbReference>
<dbReference type="Gene3D" id="3.40.50.80">
    <property type="entry name" value="Nucleotide-binding domain of ferredoxin-NADP reductase (FNR) module"/>
    <property type="match status" value="1"/>
</dbReference>
<dbReference type="Gene3D" id="3.40.50.300">
    <property type="entry name" value="P-loop containing nucleotide triphosphate hydrolases"/>
    <property type="match status" value="1"/>
</dbReference>
<dbReference type="Gene3D" id="2.40.30.10">
    <property type="entry name" value="Translation factors"/>
    <property type="match status" value="1"/>
</dbReference>
<dbReference type="InterPro" id="IPR003593">
    <property type="entry name" value="AAA+_ATPase"/>
</dbReference>
<dbReference type="InterPro" id="IPR011527">
    <property type="entry name" value="ABC1_TM_dom"/>
</dbReference>
<dbReference type="InterPro" id="IPR036640">
    <property type="entry name" value="ABC1_TM_sf"/>
</dbReference>
<dbReference type="InterPro" id="IPR003439">
    <property type="entry name" value="ABC_transporter-like_ATP-bd"/>
</dbReference>
<dbReference type="InterPro" id="IPR017871">
    <property type="entry name" value="ABC_transporter-like_CS"/>
</dbReference>
<dbReference type="InterPro" id="IPR013113">
    <property type="entry name" value="FAD-bd_9_SIP"/>
</dbReference>
<dbReference type="InterPro" id="IPR017927">
    <property type="entry name" value="FAD-bd_FR_type"/>
</dbReference>
<dbReference type="InterPro" id="IPR039261">
    <property type="entry name" value="FNR_nucleotide-bd"/>
</dbReference>
<dbReference type="InterPro" id="IPR027417">
    <property type="entry name" value="P-loop_NTPase"/>
</dbReference>
<dbReference type="InterPro" id="IPR017938">
    <property type="entry name" value="Riboflavin_synthase-like_b-brl"/>
</dbReference>
<dbReference type="InterPro" id="IPR007037">
    <property type="entry name" value="SIP_C"/>
</dbReference>
<dbReference type="InterPro" id="IPR039421">
    <property type="entry name" value="Type_1_exporter"/>
</dbReference>
<dbReference type="PANTHER" id="PTHR24221">
    <property type="entry name" value="ATP-BINDING CASSETTE SUB-FAMILY B"/>
    <property type="match status" value="1"/>
</dbReference>
<dbReference type="PANTHER" id="PTHR24221:SF654">
    <property type="entry name" value="ATP-BINDING CASSETTE SUB-FAMILY B MEMBER 6"/>
    <property type="match status" value="1"/>
</dbReference>
<dbReference type="Pfam" id="PF00664">
    <property type="entry name" value="ABC_membrane"/>
    <property type="match status" value="1"/>
</dbReference>
<dbReference type="Pfam" id="PF00005">
    <property type="entry name" value="ABC_tran"/>
    <property type="match status" value="1"/>
</dbReference>
<dbReference type="Pfam" id="PF08021">
    <property type="entry name" value="FAD_binding_9"/>
    <property type="match status" value="1"/>
</dbReference>
<dbReference type="Pfam" id="PF04954">
    <property type="entry name" value="SIP"/>
    <property type="match status" value="1"/>
</dbReference>
<dbReference type="SMART" id="SM00382">
    <property type="entry name" value="AAA"/>
    <property type="match status" value="1"/>
</dbReference>
<dbReference type="SUPFAM" id="SSF90123">
    <property type="entry name" value="ABC transporter transmembrane region"/>
    <property type="match status" value="1"/>
</dbReference>
<dbReference type="SUPFAM" id="SSF52540">
    <property type="entry name" value="P-loop containing nucleoside triphosphate hydrolases"/>
    <property type="match status" value="1"/>
</dbReference>
<dbReference type="SUPFAM" id="SSF63380">
    <property type="entry name" value="Riboflavin synthase domain-like"/>
    <property type="match status" value="1"/>
</dbReference>
<dbReference type="PROSITE" id="PS50929">
    <property type="entry name" value="ABC_TM1F"/>
    <property type="match status" value="1"/>
</dbReference>
<dbReference type="PROSITE" id="PS00211">
    <property type="entry name" value="ABC_TRANSPORTER_1"/>
    <property type="match status" value="1"/>
</dbReference>
<dbReference type="PROSITE" id="PS50893">
    <property type="entry name" value="ABC_TRANSPORTER_2"/>
    <property type="match status" value="1"/>
</dbReference>
<dbReference type="PROSITE" id="PS51384">
    <property type="entry name" value="FAD_FR"/>
    <property type="match status" value="1"/>
</dbReference>
<comment type="function">
    <text evidence="1 7 9">Part of the ABC transporter complex IrtAB involved in the import of iron-bound mycobactin (Fe-MBT) and carboxymycobactin (Fe-cMBT) (By similarity) (PubMed:16385031, PubMed:19948799). Mycobactins are then reduced by the siderophore interaction domain to facilitate iron release in the bacterial cell (By similarity). Transmembrane domains (TMD) form a pore in the membrane and the ATP-binding domain (NBD) is responsible for energy generation (By similarity). Required for replication in human macrophages and in mouse lungs (PubMed:16385031).</text>
</comment>
<comment type="cofactor">
    <cofactor evidence="9">
        <name>FAD</name>
        <dbReference type="ChEBI" id="CHEBI:57692"/>
    </cofactor>
</comment>
<comment type="subunit">
    <text evidence="11 12">Forms a heterodimer with IrtB.</text>
</comment>
<comment type="subcellular location">
    <subcellularLocation>
        <location evidence="8">Cell inner membrane</location>
        <topology evidence="3 8">Multi-pass membrane protein</topology>
    </subcellularLocation>
</comment>
<comment type="induction">
    <text evidence="6 8">Repressed by iron and IdeR.</text>
</comment>
<comment type="domain">
    <text evidence="7 9">In IrtA the ATP-binding domain (NBD) and the transmembrane domain (TMD) are fused (PubMed:16385031). In addition, IrtA contains an N-terminal siderophore interaction domain (SID) that binds FAD (PubMed:19948799).</text>
</comment>
<comment type="similarity">
    <text evidence="10">Belongs to the ABC transporter superfamily. Siderophore-Fe(3+) uptake transporter (SIUT) (TC 3.A.1.21) family.</text>
</comment>
<comment type="caution">
    <text evidence="10">PubMed:18461140 reports that IrtA is a siderophore exporter, however this activity could be due to functional differences of IrtA in the molecular context of M.smegmatis and M.tuberculosis.</text>
</comment>
<keyword id="KW-0002">3D-structure</keyword>
<keyword id="KW-0067">ATP-binding</keyword>
<keyword id="KW-0997">Cell inner membrane</keyword>
<keyword id="KW-1003">Cell membrane</keyword>
<keyword id="KW-0274">FAD</keyword>
<keyword id="KW-0285">Flavoprotein</keyword>
<keyword id="KW-0472">Membrane</keyword>
<keyword id="KW-0547">Nucleotide-binding</keyword>
<keyword id="KW-1185">Reference proteome</keyword>
<keyword id="KW-1278">Translocase</keyword>
<keyword id="KW-0812">Transmembrane</keyword>
<keyword id="KW-1133">Transmembrane helix</keyword>
<keyword id="KW-0813">Transport</keyword>
<proteinExistence type="evidence at protein level"/>
<reference key="1">
    <citation type="journal article" date="1998" name="Nature">
        <title>Deciphering the biology of Mycobacterium tuberculosis from the complete genome sequence.</title>
        <authorList>
            <person name="Cole S.T."/>
            <person name="Brosch R."/>
            <person name="Parkhill J."/>
            <person name="Garnier T."/>
            <person name="Churcher C.M."/>
            <person name="Harris D.E."/>
            <person name="Gordon S.V."/>
            <person name="Eiglmeier K."/>
            <person name="Gas S."/>
            <person name="Barry C.E. III"/>
            <person name="Tekaia F."/>
            <person name="Badcock K."/>
            <person name="Basham D."/>
            <person name="Brown D."/>
            <person name="Chillingworth T."/>
            <person name="Connor R."/>
            <person name="Davies R.M."/>
            <person name="Devlin K."/>
            <person name="Feltwell T."/>
            <person name="Gentles S."/>
            <person name="Hamlin N."/>
            <person name="Holroyd S."/>
            <person name="Hornsby T."/>
            <person name="Jagels K."/>
            <person name="Krogh A."/>
            <person name="McLean J."/>
            <person name="Moule S."/>
            <person name="Murphy L.D."/>
            <person name="Oliver S."/>
            <person name="Osborne J."/>
            <person name="Quail M.A."/>
            <person name="Rajandream M.A."/>
            <person name="Rogers J."/>
            <person name="Rutter S."/>
            <person name="Seeger K."/>
            <person name="Skelton S."/>
            <person name="Squares S."/>
            <person name="Squares R."/>
            <person name="Sulston J.E."/>
            <person name="Taylor K."/>
            <person name="Whitehead S."/>
            <person name="Barrell B.G."/>
        </authorList>
    </citation>
    <scope>NUCLEOTIDE SEQUENCE [LARGE SCALE GENOMIC DNA]</scope>
    <source>
        <strain>ATCC 25618 / H37Rv</strain>
    </source>
</reference>
<reference key="2">
    <citation type="journal article" date="2002" name="Infect. Immun.">
        <title>IdeR, an essential gene in Mycobacterium tuberculosis: role of IdeR in iron-dependent gene expression, iron metabolism, and oxidative stress response.</title>
        <authorList>
            <person name="Rodriguez G.M."/>
            <person name="Voskuil M.I."/>
            <person name="Gold B."/>
            <person name="Schoolnik G.K."/>
            <person name="Smith I."/>
        </authorList>
    </citation>
    <scope>INDUCTION</scope>
    <source>
        <strain>ATCC 25618 / H37Rv</strain>
    </source>
</reference>
<reference key="3">
    <citation type="journal article" date="2006" name="J. Bacteriol.">
        <title>Identification of an ABC transporter required for iron acquisition and virulence in Mycobacterium tuberculosis.</title>
        <authorList>
            <person name="Rodriguez G.M."/>
            <person name="Smith I."/>
        </authorList>
    </citation>
    <scope>FUNCTION</scope>
    <scope>SUBUNIT</scope>
    <scope>DOMAIN</scope>
    <source>
        <strain>ATCC 25618 / H37Rv</strain>
    </source>
</reference>
<reference key="4">
    <citation type="journal article" date="2008" name="PLoS ONE">
        <title>Mechanistic insights into a novel exporter-importer system of Mycobacterium tuberculosis unravel its role in trafficking of iron.</title>
        <authorList>
            <person name="Farhana A."/>
            <person name="Kumar S."/>
            <person name="Rathore S.S."/>
            <person name="Ghosh P.C."/>
            <person name="Ehtesham N.Z."/>
            <person name="Tyagi A.K."/>
            <person name="Hasnain S.E."/>
        </authorList>
    </citation>
    <scope>SUBCELLULAR LOCATION</scope>
    <scope>INDUCTION</scope>
    <source>
        <strain>ATCC 25618 / H37Rv</strain>
    </source>
</reference>
<reference key="5">
    <citation type="journal article" date="2010" name="J. Bacteriol.">
        <title>The Mycobacterium tuberculosis high-affinity iron importer, IrtA, contains an FAD-binding domain.</title>
        <authorList>
            <person name="Ryndak M.B."/>
            <person name="Wang S."/>
            <person name="Smith I."/>
            <person name="Rodriguez G.M."/>
        </authorList>
    </citation>
    <scope>FUNCTION</scope>
    <scope>COFACTOR</scope>
    <scope>SUBUNIT</scope>
    <scope>DOMAIN</scope>
    <scope>TOPOLOGY</scope>
    <scope>MUTAGENESIS OF ARG-70; TYR-72 AND THR-73</scope>
    <source>
        <strain>ATCC 25618 / H37Rv</strain>
    </source>
</reference>
<reference key="6">
    <citation type="journal article" date="2011" name="Mol. Cell. Proteomics">
        <title>Proteogenomic analysis of Mycobacterium tuberculosis by high resolution mass spectrometry.</title>
        <authorList>
            <person name="Kelkar D.S."/>
            <person name="Kumar D."/>
            <person name="Kumar P."/>
            <person name="Balakrishnan L."/>
            <person name="Muthusamy B."/>
            <person name="Yadav A.K."/>
            <person name="Shrivastava P."/>
            <person name="Marimuthu A."/>
            <person name="Anand S."/>
            <person name="Sundaram H."/>
            <person name="Kingsbury R."/>
            <person name="Harsha H.C."/>
            <person name="Nair B."/>
            <person name="Prasad T.S."/>
            <person name="Chauhan D.S."/>
            <person name="Katoch K."/>
            <person name="Katoch V.M."/>
            <person name="Kumar P."/>
            <person name="Chaerkady R."/>
            <person name="Ramachandran S."/>
            <person name="Dash D."/>
            <person name="Pandey A."/>
        </authorList>
    </citation>
    <scope>IDENTIFICATION BY MASS SPECTROMETRY [LARGE SCALE ANALYSIS]</scope>
    <source>
        <strain>ATCC 25618 / H37Rv</strain>
    </source>
</reference>
<feature type="chain" id="PRO_0000093255" description="Mycobactin import ATP-binding/permease protein IrtA">
    <location>
        <begin position="1"/>
        <end position="859"/>
    </location>
</feature>
<feature type="topological domain" description="Cytoplasmic" evidence="12">
    <location>
        <begin position="1"/>
        <end position="292"/>
    </location>
</feature>
<feature type="transmembrane region" description="Helical" evidence="3">
    <location>
        <begin position="293"/>
        <end position="313"/>
    </location>
</feature>
<feature type="topological domain" description="Periplasmic" evidence="12">
    <location>
        <begin position="314"/>
        <end position="334"/>
    </location>
</feature>
<feature type="transmembrane region" description="Helical" evidence="3">
    <location>
        <begin position="335"/>
        <end position="355"/>
    </location>
</feature>
<feature type="topological domain" description="Cytoplasmic" evidence="12">
    <location>
        <begin position="356"/>
        <end position="408"/>
    </location>
</feature>
<feature type="transmembrane region" description="Helical" evidence="3">
    <location>
        <begin position="409"/>
        <end position="429"/>
    </location>
</feature>
<feature type="topological domain" description="Periplasmic" evidence="12">
    <location>
        <begin position="430"/>
        <end position="432"/>
    </location>
</feature>
<feature type="transmembrane region" description="Helical" evidence="3">
    <location>
        <begin position="433"/>
        <end position="453"/>
    </location>
</feature>
<feature type="topological domain" description="Cytoplasmic" evidence="12">
    <location>
        <begin position="454"/>
        <end position="519"/>
    </location>
</feature>
<feature type="transmembrane region" description="Helical" evidence="3">
    <location>
        <begin position="520"/>
        <end position="540"/>
    </location>
</feature>
<feature type="topological domain" description="Periplasmic" evidence="12">
    <location>
        <begin position="541"/>
        <end position="548"/>
    </location>
</feature>
<feature type="transmembrane region" description="Helical" evidence="3">
    <location>
        <begin position="549"/>
        <end position="569"/>
    </location>
</feature>
<feature type="topological domain" description="Cytoplasmic" evidence="12">
    <location>
        <begin position="570"/>
        <end position="859"/>
    </location>
</feature>
<feature type="domain" description="FAD-binding FR-type" evidence="4">
    <location>
        <begin position="15"/>
        <end position="122"/>
    </location>
</feature>
<feature type="domain" description="ABC transmembrane type-1" evidence="3">
    <location>
        <begin position="293"/>
        <end position="575"/>
    </location>
</feature>
<feature type="domain" description="ABC transporter" evidence="2">
    <location>
        <begin position="610"/>
        <end position="843"/>
    </location>
</feature>
<feature type="region of interest" description="Disordered" evidence="5">
    <location>
        <begin position="247"/>
        <end position="267"/>
    </location>
</feature>
<feature type="binding site" evidence="1">
    <location>
        <begin position="70"/>
        <end position="73"/>
    </location>
    <ligand>
        <name>FAD</name>
        <dbReference type="ChEBI" id="CHEBI:57692"/>
    </ligand>
</feature>
<feature type="binding site" evidence="1">
    <location>
        <begin position="87"/>
        <end position="91"/>
    </location>
    <ligand>
        <name>FAD</name>
        <dbReference type="ChEBI" id="CHEBI:57692"/>
    </ligand>
</feature>
<feature type="binding site" evidence="1">
    <location>
        <begin position="97"/>
        <end position="98"/>
    </location>
    <ligand>
        <name>FAD</name>
        <dbReference type="ChEBI" id="CHEBI:57692"/>
    </ligand>
</feature>
<feature type="binding site" evidence="2">
    <location>
        <begin position="643"/>
        <end position="650"/>
    </location>
    <ligand>
        <name>ATP</name>
        <dbReference type="ChEBI" id="CHEBI:30616"/>
    </ligand>
</feature>
<feature type="mutagenesis site" description="No change in FAD-binding and in activity." evidence="9">
    <original>R</original>
    <variation>A</variation>
    <location>
        <position position="70"/>
    </location>
</feature>
<feature type="mutagenesis site" description="Decrease in FAD-binding and loss of activity." evidence="9">
    <original>Y</original>
    <variation>A</variation>
    <location>
        <position position="72"/>
    </location>
</feature>
<feature type="mutagenesis site" description="Decrease in FAD-binding and loss of activity." evidence="9">
    <original>T</original>
    <variation>A</variation>
    <location>
        <position position="73"/>
    </location>
</feature>
<feature type="strand" evidence="14">
    <location>
        <begin position="278"/>
        <end position="280"/>
    </location>
</feature>
<feature type="helix" evidence="14">
    <location>
        <begin position="281"/>
        <end position="285"/>
    </location>
</feature>
<feature type="strand" evidence="14">
    <location>
        <begin position="288"/>
        <end position="290"/>
    </location>
</feature>
<feature type="helix" evidence="14">
    <location>
        <begin position="291"/>
        <end position="305"/>
    </location>
</feature>
<feature type="turn" evidence="14">
    <location>
        <begin position="306"/>
        <end position="309"/>
    </location>
</feature>
<feature type="helix" evidence="14">
    <location>
        <begin position="310"/>
        <end position="322"/>
    </location>
</feature>
<feature type="helix" evidence="14">
    <location>
        <begin position="331"/>
        <end position="374"/>
    </location>
</feature>
<feature type="helix" evidence="14">
    <location>
        <begin position="379"/>
        <end position="384"/>
    </location>
</feature>
<feature type="helix" evidence="14">
    <location>
        <begin position="388"/>
        <end position="394"/>
    </location>
</feature>
<feature type="helix" evidence="14">
    <location>
        <begin position="396"/>
        <end position="406"/>
    </location>
</feature>
<feature type="helix" evidence="14">
    <location>
        <begin position="408"/>
        <end position="429"/>
    </location>
</feature>
<feature type="helix" evidence="14">
    <location>
        <begin position="431"/>
        <end position="436"/>
    </location>
</feature>
<feature type="helix" evidence="14">
    <location>
        <begin position="439"/>
        <end position="452"/>
    </location>
</feature>
<feature type="strand" evidence="15">
    <location>
        <begin position="455"/>
        <end position="457"/>
    </location>
</feature>
<feature type="helix" evidence="14">
    <location>
        <begin position="458"/>
        <end position="478"/>
    </location>
</feature>
<feature type="helix" evidence="14">
    <location>
        <begin position="480"/>
        <end position="485"/>
    </location>
</feature>
<feature type="helix" evidence="14">
    <location>
        <begin position="487"/>
        <end position="489"/>
    </location>
</feature>
<feature type="helix" evidence="14">
    <location>
        <begin position="491"/>
        <end position="508"/>
    </location>
</feature>
<feature type="helix" evidence="14">
    <location>
        <begin position="510"/>
        <end position="512"/>
    </location>
</feature>
<feature type="turn" evidence="14">
    <location>
        <begin position="513"/>
        <end position="516"/>
    </location>
</feature>
<feature type="helix" evidence="14">
    <location>
        <begin position="517"/>
        <end position="520"/>
    </location>
</feature>
<feature type="helix" evidence="14">
    <location>
        <begin position="524"/>
        <end position="540"/>
    </location>
</feature>
<feature type="helix" evidence="14">
    <location>
        <begin position="546"/>
        <end position="548"/>
    </location>
</feature>
<feature type="helix" evidence="14">
    <location>
        <begin position="550"/>
        <end position="555"/>
    </location>
</feature>
<feature type="turn" evidence="14">
    <location>
        <begin position="556"/>
        <end position="558"/>
    </location>
</feature>
<feature type="helix" evidence="14">
    <location>
        <begin position="559"/>
        <end position="570"/>
    </location>
</feature>
<feature type="helix" evidence="14">
    <location>
        <begin position="574"/>
        <end position="586"/>
    </location>
</feature>
<feature type="strand" evidence="15">
    <location>
        <begin position="594"/>
        <end position="596"/>
    </location>
</feature>
<feature type="strand" evidence="14">
    <location>
        <begin position="610"/>
        <end position="617"/>
    </location>
</feature>
<feature type="strand" evidence="15">
    <location>
        <begin position="619"/>
        <end position="623"/>
    </location>
</feature>
<feature type="strand" evidence="14">
    <location>
        <begin position="625"/>
        <end position="629"/>
    </location>
</feature>
<feature type="strand" evidence="14">
    <location>
        <begin position="638"/>
        <end position="642"/>
    </location>
</feature>
<feature type="helix" evidence="14">
    <location>
        <begin position="649"/>
        <end position="654"/>
    </location>
</feature>
<feature type="turn" evidence="14">
    <location>
        <begin position="655"/>
        <end position="658"/>
    </location>
</feature>
<feature type="strand" evidence="13">
    <location>
        <begin position="663"/>
        <end position="665"/>
    </location>
</feature>
<feature type="strand" evidence="14">
    <location>
        <begin position="666"/>
        <end position="669"/>
    </location>
</feature>
<feature type="helix" evidence="14">
    <location>
        <begin position="674"/>
        <end position="676"/>
    </location>
</feature>
<feature type="helix" evidence="14">
    <location>
        <begin position="679"/>
        <end position="683"/>
    </location>
</feature>
<feature type="strand" evidence="14">
    <location>
        <begin position="687"/>
        <end position="689"/>
    </location>
</feature>
<feature type="strand" evidence="14">
    <location>
        <begin position="697"/>
        <end position="699"/>
    </location>
</feature>
<feature type="helix" evidence="14">
    <location>
        <begin position="700"/>
        <end position="704"/>
    </location>
</feature>
<feature type="strand" evidence="14">
    <location>
        <begin position="706"/>
        <end position="708"/>
    </location>
</feature>
<feature type="helix" evidence="14">
    <location>
        <begin position="715"/>
        <end position="718"/>
    </location>
</feature>
<feature type="turn" evidence="14">
    <location>
        <begin position="719"/>
        <end position="724"/>
    </location>
</feature>
<feature type="helix" evidence="14">
    <location>
        <begin position="726"/>
        <end position="730"/>
    </location>
</feature>
<feature type="strand" evidence="14">
    <location>
        <begin position="732"/>
        <end position="734"/>
    </location>
</feature>
<feature type="helix" evidence="14">
    <location>
        <begin position="735"/>
        <end position="737"/>
    </location>
</feature>
<feature type="strand" evidence="14">
    <location>
        <begin position="742"/>
        <end position="745"/>
    </location>
</feature>
<feature type="turn" evidence="14">
    <location>
        <begin position="748"/>
        <end position="750"/>
    </location>
</feature>
<feature type="helix" evidence="14">
    <location>
        <begin position="752"/>
        <end position="762"/>
    </location>
</feature>
<feature type="strand" evidence="14">
    <location>
        <begin position="765"/>
        <end position="770"/>
    </location>
</feature>
<feature type="helix" evidence="14">
    <location>
        <begin position="771"/>
        <end position="773"/>
    </location>
</feature>
<feature type="turn" evidence="14">
    <location>
        <begin position="774"/>
        <end position="776"/>
    </location>
</feature>
<feature type="helix" evidence="14">
    <location>
        <begin position="779"/>
        <end position="781"/>
    </location>
</feature>
<feature type="helix" evidence="14">
    <location>
        <begin position="783"/>
        <end position="791"/>
    </location>
</feature>
<feature type="strand" evidence="14">
    <location>
        <begin position="793"/>
        <end position="800"/>
    </location>
</feature>
<feature type="turn" evidence="14">
    <location>
        <begin position="804"/>
        <end position="806"/>
    </location>
</feature>
<feature type="strand" evidence="14">
    <location>
        <begin position="807"/>
        <end position="809"/>
    </location>
</feature>
<feature type="strand" evidence="14">
    <location>
        <begin position="811"/>
        <end position="825"/>
    </location>
</feature>
<feature type="helix" evidence="14">
    <location>
        <begin position="827"/>
        <end position="830"/>
    </location>
</feature>
<feature type="helix" evidence="14">
    <location>
        <begin position="837"/>
        <end position="841"/>
    </location>
</feature>
<feature type="turn" evidence="14">
    <location>
        <begin position="842"/>
        <end position="845"/>
    </location>
</feature>
<protein>
    <recommendedName>
        <fullName evidence="10">Mycobactin import ATP-binding/permease protein IrtA</fullName>
        <ecNumber>7.2.2.-</ecNumber>
    </recommendedName>
    <alternativeName>
        <fullName>Iron-regulated transporter A</fullName>
    </alternativeName>
</protein>
<sequence length="859" mass="92966">MARGLQGVMLRSFGARDHTATVIETISIAPHFVRVRMVSPTLFQDAEAEPAAWLRFWFPDPNGSNTEFQRAYTISEADPAAGRFAVDVVLHDPAGPASSWARTVKPGATIAVMSLMGSSRFDVPEEQPAGYLLIGDSASIPGMNGIIETVPNDVPIEMYLEQHDDNDTLIPLAKHPRLRVRWVMRRDEKSLAEAIENRDWSDWYAWATPEAAALKCVRVRLRDEFGFPKSEIHAQAYWNAGRAMGTHRATEPAATEPEVGAAPQPESAVPAPARGSWRAQAASRLLAPLKLPLVLSGVLAALVTLAQLAPFVLLVELSRLLVSGAGAHRLFTVGFAAVGLLGTGALLAAALTLWLHVIDARFARALRLRLLSKLSRLPLGWFTSRGSGSIKKLVTDDTLALHYLVTHAVPDAVAAVVAPVGVLVYLFVVDWRVALVLFGPVLVYLTITSSLTIQSGPRIVQAQRWAEKMNGEAGSYLEGQPVIRVFGAASSSFRRRLDEYIGFLVAWQRPLAGKKTLMDLATRPATFLWLIAATGTLLVATHRMDPVNLLPFMFLGTTFGARLLGIAYGLGGLRTGLLAARHLQVTLDETELAVREHPREPLDGEAPATVVFDHVTFGYRPGVPVIQDVSLTLRPGTVTALVGPSGSGKSTLATLLARFHDVERGAIRVGGQDIRSLAADELYTRVGFVLQEAQLVHGTAAENIALAVPDAPAEQVQVAAREAQIHDRVLRLPDGYDTVLGANSGLSGGERQRLTIARAILGDTPVLILDEATAFADPESEYLVQQALNRLTRDRTVLVIAHRLHTITRADQIVVLDHGRIVERGTHEELLAAGGRYCRLWDTGQGSRVAVAAAQDGTR</sequence>
<accession>P9WQJ9</accession>
<accession>L0T6D6</accession>
<accession>P63391</accession>
<accession>Q11018</accession>
<organism>
    <name type="scientific">Mycobacterium tuberculosis (strain ATCC 25618 / H37Rv)</name>
    <dbReference type="NCBI Taxonomy" id="83332"/>
    <lineage>
        <taxon>Bacteria</taxon>
        <taxon>Bacillati</taxon>
        <taxon>Actinomycetota</taxon>
        <taxon>Actinomycetes</taxon>
        <taxon>Mycobacteriales</taxon>
        <taxon>Mycobacteriaceae</taxon>
        <taxon>Mycobacterium</taxon>
        <taxon>Mycobacterium tuberculosis complex</taxon>
    </lineage>
</organism>
<evidence type="ECO:0000250" key="1">
    <source>
        <dbReference type="UniProtKB" id="G7CBF5"/>
    </source>
</evidence>
<evidence type="ECO:0000255" key="2">
    <source>
        <dbReference type="PROSITE-ProRule" id="PRU00434"/>
    </source>
</evidence>
<evidence type="ECO:0000255" key="3">
    <source>
        <dbReference type="PROSITE-ProRule" id="PRU00441"/>
    </source>
</evidence>
<evidence type="ECO:0000255" key="4">
    <source>
        <dbReference type="PROSITE-ProRule" id="PRU00716"/>
    </source>
</evidence>
<evidence type="ECO:0000256" key="5">
    <source>
        <dbReference type="SAM" id="MobiDB-lite"/>
    </source>
</evidence>
<evidence type="ECO:0000269" key="6">
    <source>
    </source>
</evidence>
<evidence type="ECO:0000269" key="7">
    <source>
    </source>
</evidence>
<evidence type="ECO:0000269" key="8">
    <source>
    </source>
</evidence>
<evidence type="ECO:0000269" key="9">
    <source>
    </source>
</evidence>
<evidence type="ECO:0000305" key="10"/>
<evidence type="ECO:0000305" key="11">
    <source>
    </source>
</evidence>
<evidence type="ECO:0000305" key="12">
    <source>
    </source>
</evidence>
<evidence type="ECO:0007829" key="13">
    <source>
        <dbReference type="PDB" id="7WIU"/>
    </source>
</evidence>
<evidence type="ECO:0007829" key="14">
    <source>
        <dbReference type="PDB" id="7WIV"/>
    </source>
</evidence>
<evidence type="ECO:0007829" key="15">
    <source>
        <dbReference type="PDB" id="7WIW"/>
    </source>
</evidence>
<gene>
    <name type="primary">irtA</name>
    <name type="ordered locus">Rv1348</name>
    <name type="ORF">MTCY02B10.12</name>
</gene>
<name>IRTA_MYCTU</name>